<feature type="chain" id="PRO_0000219616" description="Photosystem II reaction center protein I">
    <location>
        <begin position="1"/>
        <end position="36"/>
    </location>
</feature>
<feature type="transmembrane region" description="Helical" evidence="1">
    <location>
        <begin position="4"/>
        <end position="24"/>
    </location>
</feature>
<keyword id="KW-0150">Chloroplast</keyword>
<keyword id="KW-0472">Membrane</keyword>
<keyword id="KW-0602">Photosynthesis</keyword>
<keyword id="KW-0604">Photosystem II</keyword>
<keyword id="KW-0934">Plastid</keyword>
<keyword id="KW-0674">Reaction center</keyword>
<keyword id="KW-0793">Thylakoid</keyword>
<keyword id="KW-0812">Transmembrane</keyword>
<keyword id="KW-1133">Transmembrane helix</keyword>
<proteinExistence type="evidence at transcript level"/>
<geneLocation type="chloroplast"/>
<dbReference type="EMBL" id="AB086179">
    <property type="protein sequence ID" value="BAC55336.1"/>
    <property type="molecule type" value="Genomic_DNA"/>
</dbReference>
<dbReference type="EMBL" id="AB087428">
    <property type="protein sequence ID" value="BAC55427.1"/>
    <property type="molecule type" value="mRNA"/>
</dbReference>
<dbReference type="RefSeq" id="NP_777400.1">
    <property type="nucleotide sequence ID" value="NC_004543.1"/>
</dbReference>
<dbReference type="SMR" id="Q85CN1"/>
<dbReference type="GeneID" id="2553403"/>
<dbReference type="GO" id="GO:0009535">
    <property type="term" value="C:chloroplast thylakoid membrane"/>
    <property type="evidence" value="ECO:0007669"/>
    <property type="project" value="UniProtKB-SubCell"/>
</dbReference>
<dbReference type="GO" id="GO:0009539">
    <property type="term" value="C:photosystem II reaction center"/>
    <property type="evidence" value="ECO:0007669"/>
    <property type="project" value="InterPro"/>
</dbReference>
<dbReference type="GO" id="GO:0015979">
    <property type="term" value="P:photosynthesis"/>
    <property type="evidence" value="ECO:0007669"/>
    <property type="project" value="UniProtKB-UniRule"/>
</dbReference>
<dbReference type="HAMAP" id="MF_01316">
    <property type="entry name" value="PSII_PsbI"/>
    <property type="match status" value="1"/>
</dbReference>
<dbReference type="InterPro" id="IPR003686">
    <property type="entry name" value="PSII_PsbI"/>
</dbReference>
<dbReference type="InterPro" id="IPR037271">
    <property type="entry name" value="PSII_PsbI_sf"/>
</dbReference>
<dbReference type="NCBIfam" id="NF002735">
    <property type="entry name" value="PRK02655.1"/>
    <property type="match status" value="1"/>
</dbReference>
<dbReference type="PANTHER" id="PTHR35772">
    <property type="entry name" value="PHOTOSYSTEM II REACTION CENTER PROTEIN I"/>
    <property type="match status" value="1"/>
</dbReference>
<dbReference type="PANTHER" id="PTHR35772:SF1">
    <property type="entry name" value="PHOTOSYSTEM II REACTION CENTER PROTEIN I"/>
    <property type="match status" value="1"/>
</dbReference>
<dbReference type="Pfam" id="PF02532">
    <property type="entry name" value="PsbI"/>
    <property type="match status" value="1"/>
</dbReference>
<dbReference type="SUPFAM" id="SSF161041">
    <property type="entry name" value="Photosystem II reaction center protein I, PsbI"/>
    <property type="match status" value="1"/>
</dbReference>
<sequence>MLTLKLFVYTVVIFFVSLFVFGFLSNDPKRNPGRKE</sequence>
<comment type="function">
    <text evidence="1">One of the components of the core complex of photosystem II (PSII), required for its stability and/or assembly. PSII is a light-driven water:plastoquinone oxidoreductase that uses light energy to abstract electrons from H(2)O, generating O(2) and a proton gradient subsequently used for ATP formation. It consists of a core antenna complex that captures photons, and an electron transfer chain that converts photonic excitation into a charge separation.</text>
</comment>
<comment type="subunit">
    <text evidence="1">PSII is composed of 1 copy each of membrane proteins PsbA, PsbB, PsbC, PsbD, PsbE, PsbF, PsbH, PsbI, PsbJ, PsbK, PsbL, PsbM, PsbT, PsbX, PsbY, PsbZ, Psb30/Ycf12, at least 3 peripheral proteins of the oxygen-evolving complex and a large number of cofactors. It forms dimeric complexes.</text>
</comment>
<comment type="subcellular location">
    <subcellularLocation>
        <location evidence="1">Plastid</location>
        <location evidence="1">Chloroplast thylakoid membrane</location>
        <topology evidence="1">Single-pass membrane protein</topology>
    </subcellularLocation>
</comment>
<comment type="similarity">
    <text evidence="1">Belongs to the PsbI family.</text>
</comment>
<accession>Q85CN1</accession>
<gene>
    <name evidence="1" type="primary">psbI</name>
</gene>
<reference key="1">
    <citation type="journal article" date="2003" name="Nucleic Acids Res.">
        <title>The complete nucleotide sequence of the hornwort (Anthoceros formosae) chloroplast genome: insight into the earliest land plants.</title>
        <authorList>
            <person name="Kugita M."/>
            <person name="Kaneko A."/>
            <person name="Yamamoto Y."/>
            <person name="Takeya Y."/>
            <person name="Matsumoto T."/>
            <person name="Yoshinaga K."/>
        </authorList>
    </citation>
    <scope>NUCLEOTIDE SEQUENCE [LARGE SCALE GENOMIC DNA]</scope>
</reference>
<reference key="2">
    <citation type="journal article" date="2003" name="Nucleic Acids Res.">
        <title>RNA editing in hornwort chloroplasts makes more than half the genes functional.</title>
        <authorList>
            <person name="Kugita M."/>
            <person name="Yamamoto Y."/>
            <person name="Fujikawa T."/>
            <person name="Matsumoto T."/>
            <person name="Yoshinaga K."/>
        </authorList>
    </citation>
    <scope>NUCLEOTIDE SEQUENCE [MRNA]</scope>
    <scope>ABSENCE OF RNA EDITING</scope>
    <source>
        <tissue>Thallus</tissue>
    </source>
</reference>
<evidence type="ECO:0000255" key="1">
    <source>
        <dbReference type="HAMAP-Rule" id="MF_01316"/>
    </source>
</evidence>
<organism>
    <name type="scientific">Anthoceros angustus</name>
    <name type="common">Hornwort</name>
    <name type="synonym">Anthoceros formosae</name>
    <dbReference type="NCBI Taxonomy" id="48387"/>
    <lineage>
        <taxon>Eukaryota</taxon>
        <taxon>Viridiplantae</taxon>
        <taxon>Streptophyta</taxon>
        <taxon>Embryophyta</taxon>
        <taxon>Anthocerotophyta</taxon>
        <taxon>Anthocerotopsida</taxon>
        <taxon>Anthocerotidae</taxon>
        <taxon>Anthocerotales</taxon>
        <taxon>Anthocerotaceae</taxon>
        <taxon>Anthoceros</taxon>
    </lineage>
</organism>
<protein>
    <recommendedName>
        <fullName evidence="1">Photosystem II reaction center protein I</fullName>
        <shortName evidence="1">PSII-I</shortName>
    </recommendedName>
    <alternativeName>
        <fullName evidence="1">PSII 4.8 kDa protein</fullName>
    </alternativeName>
</protein>
<name>PSBI_ANTAG</name>